<organism>
    <name type="scientific">Antechinus flavipes</name>
    <name type="common">Yellow-footed marsupial mouse</name>
    <name type="synonym">Phascogale flavipes</name>
    <dbReference type="NCBI Taxonomy" id="38775"/>
    <lineage>
        <taxon>Eukaryota</taxon>
        <taxon>Metazoa</taxon>
        <taxon>Chordata</taxon>
        <taxon>Craniata</taxon>
        <taxon>Vertebrata</taxon>
        <taxon>Euteleostomi</taxon>
        <taxon>Mammalia</taxon>
        <taxon>Metatheria</taxon>
        <taxon>Dasyuromorphia</taxon>
        <taxon>Dasyuridae</taxon>
        <taxon>Antechinus</taxon>
    </lineage>
</organism>
<gene>
    <name type="primary">PRM1</name>
</gene>
<feature type="chain" id="PRO_0000191440" description="Sperm protamine P1">
    <location>
        <begin position="1"/>
        <end position="63"/>
    </location>
</feature>
<feature type="region of interest" description="Disordered" evidence="2">
    <location>
        <begin position="1"/>
        <end position="63"/>
    </location>
</feature>
<evidence type="ECO:0000250" key="1"/>
<evidence type="ECO:0000256" key="2">
    <source>
        <dbReference type="SAM" id="MobiDB-lite"/>
    </source>
</evidence>
<evidence type="ECO:0000305" key="3"/>
<accession>Q71V20</accession>
<comment type="function">
    <text evidence="1">Protamines substitute for histones in the chromatin of sperm during the haploid phase of spermatogenesis. They compact sperm DNA into a highly condensed, stable and inactive complex (By similarity).</text>
</comment>
<comment type="subcellular location">
    <subcellularLocation>
        <location evidence="1">Nucleus</location>
    </subcellularLocation>
    <subcellularLocation>
        <location evidence="1">Chromosome</location>
    </subcellularLocation>
</comment>
<comment type="tissue specificity">
    <text>Testis.</text>
</comment>
<comment type="similarity">
    <text evidence="3">Belongs to the protamine P1 family.</text>
</comment>
<keyword id="KW-0158">Chromosome</keyword>
<keyword id="KW-0217">Developmental protein</keyword>
<keyword id="KW-0221">Differentiation</keyword>
<keyword id="KW-0226">DNA condensation</keyword>
<keyword id="KW-0238">DNA-binding</keyword>
<keyword id="KW-0544">Nucleosome core</keyword>
<keyword id="KW-0539">Nucleus</keyword>
<keyword id="KW-0744">Spermatogenesis</keyword>
<sequence>MARYRRHSRSRSRSRYRRRRRRRSRHHNRRRTYRRSRRHSRRRRGRRRGYSRRRYSRRGRRRY</sequence>
<proteinExistence type="evidence at transcript level"/>
<protein>
    <recommendedName>
        <fullName>Sperm protamine P1</fullName>
    </recommendedName>
</protein>
<dbReference type="EMBL" id="AF038293">
    <property type="protein sequence ID" value="AAC15620.1"/>
    <property type="molecule type" value="Genomic_DNA"/>
</dbReference>
<dbReference type="GO" id="GO:0000786">
    <property type="term" value="C:nucleosome"/>
    <property type="evidence" value="ECO:0007669"/>
    <property type="project" value="UniProtKB-KW"/>
</dbReference>
<dbReference type="GO" id="GO:0005634">
    <property type="term" value="C:nucleus"/>
    <property type="evidence" value="ECO:0007669"/>
    <property type="project" value="UniProtKB-SubCell"/>
</dbReference>
<dbReference type="GO" id="GO:0003677">
    <property type="term" value="F:DNA binding"/>
    <property type="evidence" value="ECO:0007669"/>
    <property type="project" value="UniProtKB-KW"/>
</dbReference>
<dbReference type="GO" id="GO:0030261">
    <property type="term" value="P:chromosome condensation"/>
    <property type="evidence" value="ECO:0007669"/>
    <property type="project" value="UniProtKB-KW"/>
</dbReference>
<dbReference type="GO" id="GO:0035092">
    <property type="term" value="P:sperm DNA condensation"/>
    <property type="evidence" value="ECO:0007669"/>
    <property type="project" value="InterPro"/>
</dbReference>
<dbReference type="InterPro" id="IPR000221">
    <property type="entry name" value="Protamine_P1"/>
</dbReference>
<dbReference type="PROSITE" id="PS00048">
    <property type="entry name" value="PROTAMINE_P1"/>
    <property type="match status" value="1"/>
</dbReference>
<reference key="1">
    <citation type="journal article" date="1998" name="J. Mammal.">
        <title>Phylogeny of the dasyurid marsupial genus Antechinus based on cytochrome-b, 12S-rRNA, and protamine-P1 genes.</title>
        <authorList>
            <person name="Armstrong L.A."/>
            <person name="Krajewski C."/>
            <person name="Westerman M."/>
        </authorList>
    </citation>
    <scope>NUCLEOTIDE SEQUENCE [GENOMIC DNA]</scope>
</reference>
<name>HSP1_ANTFL</name>